<evidence type="ECO:0000255" key="1">
    <source>
        <dbReference type="HAMAP-Rule" id="MF_00258"/>
    </source>
</evidence>
<dbReference type="EC" id="5.1.1.3" evidence="1"/>
<dbReference type="EMBL" id="AE009949">
    <property type="protein sequence ID" value="AAL97154.1"/>
    <property type="molecule type" value="Genomic_DNA"/>
</dbReference>
<dbReference type="SMR" id="Q8P2D3"/>
<dbReference type="KEGG" id="spm:spyM18_0411"/>
<dbReference type="HOGENOM" id="CLU_052344_0_2_9"/>
<dbReference type="UniPathway" id="UPA00219"/>
<dbReference type="GO" id="GO:0008881">
    <property type="term" value="F:glutamate racemase activity"/>
    <property type="evidence" value="ECO:0007669"/>
    <property type="project" value="UniProtKB-UniRule"/>
</dbReference>
<dbReference type="GO" id="GO:0071555">
    <property type="term" value="P:cell wall organization"/>
    <property type="evidence" value="ECO:0007669"/>
    <property type="project" value="UniProtKB-KW"/>
</dbReference>
<dbReference type="GO" id="GO:0009252">
    <property type="term" value="P:peptidoglycan biosynthetic process"/>
    <property type="evidence" value="ECO:0007669"/>
    <property type="project" value="UniProtKB-UniRule"/>
</dbReference>
<dbReference type="GO" id="GO:0008360">
    <property type="term" value="P:regulation of cell shape"/>
    <property type="evidence" value="ECO:0007669"/>
    <property type="project" value="UniProtKB-KW"/>
</dbReference>
<dbReference type="FunFam" id="3.40.50.1860:FF:000002">
    <property type="entry name" value="Glutamate racemase"/>
    <property type="match status" value="1"/>
</dbReference>
<dbReference type="Gene3D" id="3.40.50.1860">
    <property type="match status" value="2"/>
</dbReference>
<dbReference type="HAMAP" id="MF_00258">
    <property type="entry name" value="Glu_racemase"/>
    <property type="match status" value="1"/>
</dbReference>
<dbReference type="InterPro" id="IPR015942">
    <property type="entry name" value="Asp/Glu/hydantoin_racemase"/>
</dbReference>
<dbReference type="InterPro" id="IPR001920">
    <property type="entry name" value="Asp/Glu_race"/>
</dbReference>
<dbReference type="InterPro" id="IPR033134">
    <property type="entry name" value="Asp/Glu_racemase_AS_2"/>
</dbReference>
<dbReference type="InterPro" id="IPR004391">
    <property type="entry name" value="Glu_race"/>
</dbReference>
<dbReference type="NCBIfam" id="TIGR00067">
    <property type="entry name" value="glut_race"/>
    <property type="match status" value="1"/>
</dbReference>
<dbReference type="NCBIfam" id="NF002035">
    <property type="entry name" value="PRK00865.1-3"/>
    <property type="match status" value="1"/>
</dbReference>
<dbReference type="PANTHER" id="PTHR21198">
    <property type="entry name" value="GLUTAMATE RACEMASE"/>
    <property type="match status" value="1"/>
</dbReference>
<dbReference type="PANTHER" id="PTHR21198:SF2">
    <property type="entry name" value="GLUTAMATE RACEMASE"/>
    <property type="match status" value="1"/>
</dbReference>
<dbReference type="Pfam" id="PF01177">
    <property type="entry name" value="Asp_Glu_race"/>
    <property type="match status" value="1"/>
</dbReference>
<dbReference type="SUPFAM" id="SSF53681">
    <property type="entry name" value="Aspartate/glutamate racemase"/>
    <property type="match status" value="2"/>
</dbReference>
<dbReference type="PROSITE" id="PS00924">
    <property type="entry name" value="ASP_GLU_RACEMASE_2"/>
    <property type="match status" value="1"/>
</dbReference>
<protein>
    <recommendedName>
        <fullName evidence="1">Glutamate racemase</fullName>
        <ecNumber evidence="1">5.1.1.3</ecNumber>
    </recommendedName>
</protein>
<gene>
    <name evidence="1" type="primary">murI</name>
    <name type="ordered locus">spyM18_0411</name>
</gene>
<name>MURI_STRP8</name>
<organism>
    <name type="scientific">Streptococcus pyogenes serotype M18 (strain MGAS8232)</name>
    <dbReference type="NCBI Taxonomy" id="186103"/>
    <lineage>
        <taxon>Bacteria</taxon>
        <taxon>Bacillati</taxon>
        <taxon>Bacillota</taxon>
        <taxon>Bacilli</taxon>
        <taxon>Lactobacillales</taxon>
        <taxon>Streptococcaceae</taxon>
        <taxon>Streptococcus</taxon>
    </lineage>
</organism>
<feature type="chain" id="PRO_0000095524" description="Glutamate racemase">
    <location>
        <begin position="1"/>
        <end position="264"/>
    </location>
</feature>
<feature type="active site" description="Proton donor/acceptor" evidence="1">
    <location>
        <position position="73"/>
    </location>
</feature>
<feature type="active site" description="Proton donor/acceptor" evidence="1">
    <location>
        <position position="183"/>
    </location>
</feature>
<feature type="binding site" evidence="1">
    <location>
        <begin position="10"/>
        <end position="11"/>
    </location>
    <ligand>
        <name>substrate</name>
    </ligand>
</feature>
<feature type="binding site" evidence="1">
    <location>
        <begin position="42"/>
        <end position="43"/>
    </location>
    <ligand>
        <name>substrate</name>
    </ligand>
</feature>
<feature type="binding site" evidence="1">
    <location>
        <begin position="74"/>
        <end position="75"/>
    </location>
    <ligand>
        <name>substrate</name>
    </ligand>
</feature>
<feature type="binding site" evidence="1">
    <location>
        <begin position="184"/>
        <end position="185"/>
    </location>
    <ligand>
        <name>substrate</name>
    </ligand>
</feature>
<reference key="1">
    <citation type="journal article" date="2002" name="Proc. Natl. Acad. Sci. U.S.A.">
        <title>Genome sequence and comparative microarray analysis of serotype M18 group A Streptococcus strains associated with acute rheumatic fever outbreaks.</title>
        <authorList>
            <person name="Smoot J.C."/>
            <person name="Barbian K.D."/>
            <person name="Van Gompel J.J."/>
            <person name="Smoot L.M."/>
            <person name="Chaussee M.S."/>
            <person name="Sylva G.L."/>
            <person name="Sturdevant D.E."/>
            <person name="Ricklefs S.M."/>
            <person name="Porcella S.F."/>
            <person name="Parkins L.D."/>
            <person name="Beres S.B."/>
            <person name="Campbell D.S."/>
            <person name="Smith T.M."/>
            <person name="Zhang Q."/>
            <person name="Kapur V."/>
            <person name="Daly J.A."/>
            <person name="Veasy L.G."/>
            <person name="Musser J.M."/>
        </authorList>
    </citation>
    <scope>NUCLEOTIDE SEQUENCE [LARGE SCALE GENOMIC DNA]</scope>
    <source>
        <strain>MGAS8232</strain>
    </source>
</reference>
<keyword id="KW-0133">Cell shape</keyword>
<keyword id="KW-0961">Cell wall biogenesis/degradation</keyword>
<keyword id="KW-0413">Isomerase</keyword>
<keyword id="KW-0573">Peptidoglycan synthesis</keyword>
<comment type="function">
    <text evidence="1">Provides the (R)-glutamate required for cell wall biosynthesis.</text>
</comment>
<comment type="catalytic activity">
    <reaction evidence="1">
        <text>L-glutamate = D-glutamate</text>
        <dbReference type="Rhea" id="RHEA:12813"/>
        <dbReference type="ChEBI" id="CHEBI:29985"/>
        <dbReference type="ChEBI" id="CHEBI:29986"/>
        <dbReference type="EC" id="5.1.1.3"/>
    </reaction>
</comment>
<comment type="pathway">
    <text evidence="1">Cell wall biogenesis; peptidoglycan biosynthesis.</text>
</comment>
<comment type="similarity">
    <text evidence="1">Belongs to the aspartate/glutamate racemases family.</text>
</comment>
<accession>Q8P2D3</accession>
<sequence length="264" mass="29018">MDTRPIGFLDSGVGGLTVVCELIRQLPHEKIVYIGDSARAPYGPRPKKQIKEYTWELVNFLLTQNVKMIVFACNTATAVAWEEVKAALDIPVLGVVLPGASAAIKSTTKGQVGVIGTPMTVASDIYRKKIQLLAPSVQVRSLACPKFVPIVESNEMCSSIAKKIVYDSLSPLVGKIDTLVLGCTHYPLLRPIIQNVMGPSVKLIDSGAECVRDISVLLNYFDINGNYHQKAVEHRFFTTANPEIFQEIASIWLKQKINVEHVTL</sequence>
<proteinExistence type="inferred from homology"/>